<reference key="1">
    <citation type="submission" date="2008-10" db="EMBL/GenBank/DDBJ databases">
        <title>Genome sequence of Bacillus cereus AH187.</title>
        <authorList>
            <person name="Dodson R.J."/>
            <person name="Durkin A.S."/>
            <person name="Rosovitz M.J."/>
            <person name="Rasko D.A."/>
            <person name="Kolsto A.B."/>
            <person name="Okstad O.A."/>
            <person name="Ravel J."/>
            <person name="Sutton G."/>
        </authorList>
    </citation>
    <scope>NUCLEOTIDE SEQUENCE [LARGE SCALE GENOMIC DNA]</scope>
    <source>
        <strain>AH187</strain>
    </source>
</reference>
<gene>
    <name evidence="1" type="primary">glyA</name>
    <name type="ordered locus">BCAH187_A5494</name>
</gene>
<organism>
    <name type="scientific">Bacillus cereus (strain AH187)</name>
    <dbReference type="NCBI Taxonomy" id="405534"/>
    <lineage>
        <taxon>Bacteria</taxon>
        <taxon>Bacillati</taxon>
        <taxon>Bacillota</taxon>
        <taxon>Bacilli</taxon>
        <taxon>Bacillales</taxon>
        <taxon>Bacillaceae</taxon>
        <taxon>Bacillus</taxon>
        <taxon>Bacillus cereus group</taxon>
    </lineage>
</organism>
<name>GLYA_BACC7</name>
<comment type="function">
    <text evidence="1">Catalyzes the reversible interconversion of serine and glycine with tetrahydrofolate (THF) serving as the one-carbon carrier. This reaction serves as the major source of one-carbon groups required for the biosynthesis of purines, thymidylate, methionine, and other important biomolecules. Also exhibits THF-independent aldolase activity toward beta-hydroxyamino acids, producing glycine and aldehydes, via a retro-aldol mechanism.</text>
</comment>
<comment type="catalytic activity">
    <reaction evidence="1">
        <text>(6R)-5,10-methylene-5,6,7,8-tetrahydrofolate + glycine + H2O = (6S)-5,6,7,8-tetrahydrofolate + L-serine</text>
        <dbReference type="Rhea" id="RHEA:15481"/>
        <dbReference type="ChEBI" id="CHEBI:15377"/>
        <dbReference type="ChEBI" id="CHEBI:15636"/>
        <dbReference type="ChEBI" id="CHEBI:33384"/>
        <dbReference type="ChEBI" id="CHEBI:57305"/>
        <dbReference type="ChEBI" id="CHEBI:57453"/>
        <dbReference type="EC" id="2.1.2.1"/>
    </reaction>
</comment>
<comment type="cofactor">
    <cofactor evidence="1">
        <name>pyridoxal 5'-phosphate</name>
        <dbReference type="ChEBI" id="CHEBI:597326"/>
    </cofactor>
</comment>
<comment type="pathway">
    <text evidence="1">One-carbon metabolism; tetrahydrofolate interconversion.</text>
</comment>
<comment type="pathway">
    <text evidence="1">Amino-acid biosynthesis; glycine biosynthesis; glycine from L-serine: step 1/1.</text>
</comment>
<comment type="subunit">
    <text evidence="1">Homodimer.</text>
</comment>
<comment type="subcellular location">
    <subcellularLocation>
        <location evidence="1">Cytoplasm</location>
    </subcellularLocation>
</comment>
<comment type="similarity">
    <text evidence="1">Belongs to the SHMT family.</text>
</comment>
<dbReference type="EC" id="2.1.2.1" evidence="1"/>
<dbReference type="EMBL" id="CP001177">
    <property type="protein sequence ID" value="ACJ79166.1"/>
    <property type="molecule type" value="Genomic_DNA"/>
</dbReference>
<dbReference type="SMR" id="B7HY76"/>
<dbReference type="KEGG" id="bcr:BCAH187_A5494"/>
<dbReference type="HOGENOM" id="CLU_022477_2_1_9"/>
<dbReference type="UniPathway" id="UPA00193"/>
<dbReference type="UniPathway" id="UPA00288">
    <property type="reaction ID" value="UER01023"/>
</dbReference>
<dbReference type="Proteomes" id="UP000002214">
    <property type="component" value="Chromosome"/>
</dbReference>
<dbReference type="GO" id="GO:0005829">
    <property type="term" value="C:cytosol"/>
    <property type="evidence" value="ECO:0007669"/>
    <property type="project" value="TreeGrafter"/>
</dbReference>
<dbReference type="GO" id="GO:0004372">
    <property type="term" value="F:glycine hydroxymethyltransferase activity"/>
    <property type="evidence" value="ECO:0007669"/>
    <property type="project" value="UniProtKB-UniRule"/>
</dbReference>
<dbReference type="GO" id="GO:0030170">
    <property type="term" value="F:pyridoxal phosphate binding"/>
    <property type="evidence" value="ECO:0007669"/>
    <property type="project" value="UniProtKB-UniRule"/>
</dbReference>
<dbReference type="GO" id="GO:0019264">
    <property type="term" value="P:glycine biosynthetic process from serine"/>
    <property type="evidence" value="ECO:0007669"/>
    <property type="project" value="UniProtKB-UniRule"/>
</dbReference>
<dbReference type="GO" id="GO:0035999">
    <property type="term" value="P:tetrahydrofolate interconversion"/>
    <property type="evidence" value="ECO:0007669"/>
    <property type="project" value="UniProtKB-UniRule"/>
</dbReference>
<dbReference type="CDD" id="cd00378">
    <property type="entry name" value="SHMT"/>
    <property type="match status" value="1"/>
</dbReference>
<dbReference type="FunFam" id="3.40.640.10:FF:000001">
    <property type="entry name" value="Serine hydroxymethyltransferase"/>
    <property type="match status" value="1"/>
</dbReference>
<dbReference type="FunFam" id="3.90.1150.10:FF:000003">
    <property type="entry name" value="Serine hydroxymethyltransferase"/>
    <property type="match status" value="1"/>
</dbReference>
<dbReference type="Gene3D" id="3.90.1150.10">
    <property type="entry name" value="Aspartate Aminotransferase, domain 1"/>
    <property type="match status" value="1"/>
</dbReference>
<dbReference type="Gene3D" id="3.40.640.10">
    <property type="entry name" value="Type I PLP-dependent aspartate aminotransferase-like (Major domain)"/>
    <property type="match status" value="1"/>
</dbReference>
<dbReference type="HAMAP" id="MF_00051">
    <property type="entry name" value="SHMT"/>
    <property type="match status" value="1"/>
</dbReference>
<dbReference type="InterPro" id="IPR015424">
    <property type="entry name" value="PyrdxlP-dep_Trfase"/>
</dbReference>
<dbReference type="InterPro" id="IPR015421">
    <property type="entry name" value="PyrdxlP-dep_Trfase_major"/>
</dbReference>
<dbReference type="InterPro" id="IPR015422">
    <property type="entry name" value="PyrdxlP-dep_Trfase_small"/>
</dbReference>
<dbReference type="InterPro" id="IPR001085">
    <property type="entry name" value="Ser_HO-MeTrfase"/>
</dbReference>
<dbReference type="InterPro" id="IPR049943">
    <property type="entry name" value="Ser_HO-MeTrfase-like"/>
</dbReference>
<dbReference type="InterPro" id="IPR019798">
    <property type="entry name" value="Ser_HO-MeTrfase_PLP_BS"/>
</dbReference>
<dbReference type="InterPro" id="IPR039429">
    <property type="entry name" value="SHMT-like_dom"/>
</dbReference>
<dbReference type="NCBIfam" id="NF000586">
    <property type="entry name" value="PRK00011.1"/>
    <property type="match status" value="1"/>
</dbReference>
<dbReference type="PANTHER" id="PTHR11680">
    <property type="entry name" value="SERINE HYDROXYMETHYLTRANSFERASE"/>
    <property type="match status" value="1"/>
</dbReference>
<dbReference type="PANTHER" id="PTHR11680:SF35">
    <property type="entry name" value="SERINE HYDROXYMETHYLTRANSFERASE 1"/>
    <property type="match status" value="1"/>
</dbReference>
<dbReference type="Pfam" id="PF00464">
    <property type="entry name" value="SHMT"/>
    <property type="match status" value="1"/>
</dbReference>
<dbReference type="PIRSF" id="PIRSF000412">
    <property type="entry name" value="SHMT"/>
    <property type="match status" value="1"/>
</dbReference>
<dbReference type="SUPFAM" id="SSF53383">
    <property type="entry name" value="PLP-dependent transferases"/>
    <property type="match status" value="1"/>
</dbReference>
<dbReference type="PROSITE" id="PS00096">
    <property type="entry name" value="SHMT"/>
    <property type="match status" value="1"/>
</dbReference>
<feature type="chain" id="PRO_1000116821" description="Serine hydroxymethyltransferase">
    <location>
        <begin position="1"/>
        <end position="413"/>
    </location>
</feature>
<feature type="binding site" evidence="1">
    <location>
        <position position="117"/>
    </location>
    <ligand>
        <name>(6S)-5,6,7,8-tetrahydrofolate</name>
        <dbReference type="ChEBI" id="CHEBI:57453"/>
    </ligand>
</feature>
<feature type="binding site" evidence="1">
    <location>
        <begin position="121"/>
        <end position="123"/>
    </location>
    <ligand>
        <name>(6S)-5,6,7,8-tetrahydrofolate</name>
        <dbReference type="ChEBI" id="CHEBI:57453"/>
    </ligand>
</feature>
<feature type="binding site" evidence="1">
    <location>
        <position position="239"/>
    </location>
    <ligand>
        <name>(6S)-5,6,7,8-tetrahydrofolate</name>
        <dbReference type="ChEBI" id="CHEBI:57453"/>
    </ligand>
</feature>
<feature type="binding site" evidence="1">
    <location>
        <begin position="349"/>
        <end position="351"/>
    </location>
    <ligand>
        <name>(6S)-5,6,7,8-tetrahydrofolate</name>
        <dbReference type="ChEBI" id="CHEBI:57453"/>
    </ligand>
</feature>
<feature type="site" description="Plays an important role in substrate specificity" evidence="1">
    <location>
        <position position="225"/>
    </location>
</feature>
<feature type="modified residue" description="N6-(pyridoxal phosphate)lysine" evidence="1">
    <location>
        <position position="226"/>
    </location>
</feature>
<accession>B7HY76</accession>
<sequence length="413" mass="45173">MDHLKRQDEKVFAAIEAELGRQRSKIELIASENFVSEAVMEAQGSVLTNKYAEGYPGKRYYGGCEHVDVVEDIARDRVKEIFGAEHVNVQPHSGAQANMAVYFTILEQGDTVLGMNLSHGGHLTHGSPVNFSGVQYNFVEYGVDAESHRINYDDVLAKAKEHKPKLIVAGASAYPRVIDFKRFREIADEVGAYLMVDMAHIAGLVAAGLHPNPVPHAHFVTTTTHKTLRGPRGGMILCEEQFAKQIDKSIFPGIQGGPLMHVIAAKAVAFGEALQDDFKTYAQNIINNANRLAEGLQKEGLTLVSGGTDNHLILIDVRNLEITGKVAEHVLDEVGITVNKNTIPFETASPFVTSGVRIGTAAVTSRGFGLEEMDEIASLIAYTLKNHENEAALEEARKRVEALTSKFPMYPNL</sequence>
<evidence type="ECO:0000255" key="1">
    <source>
        <dbReference type="HAMAP-Rule" id="MF_00051"/>
    </source>
</evidence>
<proteinExistence type="inferred from homology"/>
<protein>
    <recommendedName>
        <fullName evidence="1">Serine hydroxymethyltransferase</fullName>
        <shortName evidence="1">SHMT</shortName>
        <shortName evidence="1">Serine methylase</shortName>
        <ecNumber evidence="1">2.1.2.1</ecNumber>
    </recommendedName>
</protein>
<keyword id="KW-0028">Amino-acid biosynthesis</keyword>
<keyword id="KW-0963">Cytoplasm</keyword>
<keyword id="KW-0554">One-carbon metabolism</keyword>
<keyword id="KW-0663">Pyridoxal phosphate</keyword>
<keyword id="KW-0808">Transferase</keyword>